<name>RL14_DESAL</name>
<keyword id="KW-1185">Reference proteome</keyword>
<keyword id="KW-0687">Ribonucleoprotein</keyword>
<keyword id="KW-0689">Ribosomal protein</keyword>
<keyword id="KW-0694">RNA-binding</keyword>
<keyword id="KW-0699">rRNA-binding</keyword>
<gene>
    <name evidence="1" type="primary">rplN</name>
    <name type="ordered locus">Dalk_1905</name>
</gene>
<evidence type="ECO:0000255" key="1">
    <source>
        <dbReference type="HAMAP-Rule" id="MF_01367"/>
    </source>
</evidence>
<evidence type="ECO:0000305" key="2"/>
<reference key="1">
    <citation type="journal article" date="2012" name="Environ. Microbiol.">
        <title>The genome sequence of Desulfatibacillum alkenivorans AK-01: a blueprint for anaerobic alkane oxidation.</title>
        <authorList>
            <person name="Callaghan A.V."/>
            <person name="Morris B.E."/>
            <person name="Pereira I.A."/>
            <person name="McInerney M.J."/>
            <person name="Austin R.N."/>
            <person name="Groves J.T."/>
            <person name="Kukor J.J."/>
            <person name="Suflita J.M."/>
            <person name="Young L.Y."/>
            <person name="Zylstra G.J."/>
            <person name="Wawrik B."/>
        </authorList>
    </citation>
    <scope>NUCLEOTIDE SEQUENCE [LARGE SCALE GENOMIC DNA]</scope>
    <source>
        <strain>AK-01</strain>
    </source>
</reference>
<accession>B8FES5</accession>
<feature type="chain" id="PRO_1000144256" description="Large ribosomal subunit protein uL14">
    <location>
        <begin position="1"/>
        <end position="122"/>
    </location>
</feature>
<proteinExistence type="inferred from homology"/>
<protein>
    <recommendedName>
        <fullName evidence="1">Large ribosomal subunit protein uL14</fullName>
    </recommendedName>
    <alternativeName>
        <fullName evidence="2">50S ribosomal protein L14</fullName>
    </alternativeName>
</protein>
<sequence>MIQAETRLTVADNSGAKVLGCIKVLGGSKRRYASVGDIIVVSVKEAIPNSKVKKGDVMKAVIVRTKKEIRRPDGTYIRFDDNSAVLINATKEPIGTRIFGPVARELRAKRFMKIISLAPEVL</sequence>
<organism>
    <name type="scientific">Desulfatibacillum aliphaticivorans</name>
    <dbReference type="NCBI Taxonomy" id="218208"/>
    <lineage>
        <taxon>Bacteria</taxon>
        <taxon>Pseudomonadati</taxon>
        <taxon>Thermodesulfobacteriota</taxon>
        <taxon>Desulfobacteria</taxon>
        <taxon>Desulfobacterales</taxon>
        <taxon>Desulfatibacillaceae</taxon>
        <taxon>Desulfatibacillum</taxon>
    </lineage>
</organism>
<comment type="function">
    <text evidence="1">Binds to 23S rRNA. Forms part of two intersubunit bridges in the 70S ribosome.</text>
</comment>
<comment type="subunit">
    <text evidence="1">Part of the 50S ribosomal subunit. Forms a cluster with proteins L3 and L19. In the 70S ribosome, L14 and L19 interact and together make contacts with the 16S rRNA in bridges B5 and B8.</text>
</comment>
<comment type="similarity">
    <text evidence="1">Belongs to the universal ribosomal protein uL14 family.</text>
</comment>
<dbReference type="EMBL" id="CP001322">
    <property type="protein sequence ID" value="ACL03602.1"/>
    <property type="molecule type" value="Genomic_DNA"/>
</dbReference>
<dbReference type="RefSeq" id="WP_012611033.1">
    <property type="nucleotide sequence ID" value="NC_011768.1"/>
</dbReference>
<dbReference type="SMR" id="B8FES5"/>
<dbReference type="KEGG" id="dal:Dalk_1905"/>
<dbReference type="eggNOG" id="COG0093">
    <property type="taxonomic scope" value="Bacteria"/>
</dbReference>
<dbReference type="HOGENOM" id="CLU_095071_2_1_7"/>
<dbReference type="Proteomes" id="UP000000739">
    <property type="component" value="Chromosome"/>
</dbReference>
<dbReference type="GO" id="GO:0022625">
    <property type="term" value="C:cytosolic large ribosomal subunit"/>
    <property type="evidence" value="ECO:0007669"/>
    <property type="project" value="TreeGrafter"/>
</dbReference>
<dbReference type="GO" id="GO:0070180">
    <property type="term" value="F:large ribosomal subunit rRNA binding"/>
    <property type="evidence" value="ECO:0007669"/>
    <property type="project" value="TreeGrafter"/>
</dbReference>
<dbReference type="GO" id="GO:0003735">
    <property type="term" value="F:structural constituent of ribosome"/>
    <property type="evidence" value="ECO:0007669"/>
    <property type="project" value="InterPro"/>
</dbReference>
<dbReference type="GO" id="GO:0006412">
    <property type="term" value="P:translation"/>
    <property type="evidence" value="ECO:0007669"/>
    <property type="project" value="UniProtKB-UniRule"/>
</dbReference>
<dbReference type="CDD" id="cd00337">
    <property type="entry name" value="Ribosomal_uL14"/>
    <property type="match status" value="1"/>
</dbReference>
<dbReference type="FunFam" id="2.40.150.20:FF:000001">
    <property type="entry name" value="50S ribosomal protein L14"/>
    <property type="match status" value="1"/>
</dbReference>
<dbReference type="Gene3D" id="2.40.150.20">
    <property type="entry name" value="Ribosomal protein L14"/>
    <property type="match status" value="1"/>
</dbReference>
<dbReference type="HAMAP" id="MF_01367">
    <property type="entry name" value="Ribosomal_uL14"/>
    <property type="match status" value="1"/>
</dbReference>
<dbReference type="InterPro" id="IPR000218">
    <property type="entry name" value="Ribosomal_uL14"/>
</dbReference>
<dbReference type="InterPro" id="IPR005745">
    <property type="entry name" value="Ribosomal_uL14_bac-type"/>
</dbReference>
<dbReference type="InterPro" id="IPR019972">
    <property type="entry name" value="Ribosomal_uL14_CS"/>
</dbReference>
<dbReference type="InterPro" id="IPR036853">
    <property type="entry name" value="Ribosomal_uL14_sf"/>
</dbReference>
<dbReference type="NCBIfam" id="TIGR01067">
    <property type="entry name" value="rplN_bact"/>
    <property type="match status" value="1"/>
</dbReference>
<dbReference type="PANTHER" id="PTHR11761">
    <property type="entry name" value="50S/60S RIBOSOMAL PROTEIN L14/L23"/>
    <property type="match status" value="1"/>
</dbReference>
<dbReference type="PANTHER" id="PTHR11761:SF3">
    <property type="entry name" value="LARGE RIBOSOMAL SUBUNIT PROTEIN UL14M"/>
    <property type="match status" value="1"/>
</dbReference>
<dbReference type="Pfam" id="PF00238">
    <property type="entry name" value="Ribosomal_L14"/>
    <property type="match status" value="1"/>
</dbReference>
<dbReference type="SMART" id="SM01374">
    <property type="entry name" value="Ribosomal_L14"/>
    <property type="match status" value="1"/>
</dbReference>
<dbReference type="SUPFAM" id="SSF50193">
    <property type="entry name" value="Ribosomal protein L14"/>
    <property type="match status" value="1"/>
</dbReference>
<dbReference type="PROSITE" id="PS00049">
    <property type="entry name" value="RIBOSOMAL_L14"/>
    <property type="match status" value="1"/>
</dbReference>